<comment type="function">
    <text evidence="2">Catalyzes the formation of N(7)-methylguanine at position 46 (m7G46) in tRNA.</text>
</comment>
<comment type="catalytic activity">
    <reaction evidence="2">
        <text>guanosine(46) in tRNA + S-adenosyl-L-methionine = N(7)-methylguanosine(46) in tRNA + S-adenosyl-L-homocysteine</text>
        <dbReference type="Rhea" id="RHEA:42708"/>
        <dbReference type="Rhea" id="RHEA-COMP:10188"/>
        <dbReference type="Rhea" id="RHEA-COMP:10189"/>
        <dbReference type="ChEBI" id="CHEBI:57856"/>
        <dbReference type="ChEBI" id="CHEBI:59789"/>
        <dbReference type="ChEBI" id="CHEBI:74269"/>
        <dbReference type="ChEBI" id="CHEBI:74480"/>
        <dbReference type="EC" id="2.1.1.33"/>
    </reaction>
</comment>
<comment type="pathway">
    <text evidence="2">tRNA modification; N(7)-methylguanine-tRNA biosynthesis.</text>
</comment>
<comment type="similarity">
    <text evidence="2">Belongs to the class I-like SAM-binding methyltransferase superfamily. TrmB family.</text>
</comment>
<reference key="1">
    <citation type="journal article" date="2007" name="Genome Biol.">
        <title>Comparison of Francisella tularensis genomes reveals evolutionary events associated with the emergence of human pathogenic strains.</title>
        <authorList>
            <person name="Rohmer L."/>
            <person name="Fong C."/>
            <person name="Abmayr S."/>
            <person name="Wasnick M."/>
            <person name="Larson Freeman T.J."/>
            <person name="Radey M."/>
            <person name="Guina T."/>
            <person name="Svensson K."/>
            <person name="Hayden H.S."/>
            <person name="Jacobs M."/>
            <person name="Gallagher L.A."/>
            <person name="Manoil C."/>
            <person name="Ernst R.K."/>
            <person name="Drees B."/>
            <person name="Buckley D."/>
            <person name="Haugen E."/>
            <person name="Bovee D."/>
            <person name="Zhou Y."/>
            <person name="Chang J."/>
            <person name="Levy R."/>
            <person name="Lim R."/>
            <person name="Gillett W."/>
            <person name="Guenthener D."/>
            <person name="Kang A."/>
            <person name="Shaffer S.A."/>
            <person name="Taylor G."/>
            <person name="Chen J."/>
            <person name="Gallis B."/>
            <person name="D'Argenio D.A."/>
            <person name="Forsman M."/>
            <person name="Olson M.V."/>
            <person name="Goodlett D.R."/>
            <person name="Kaul R."/>
            <person name="Miller S.I."/>
            <person name="Brittnacher M.J."/>
        </authorList>
    </citation>
    <scope>NUCLEOTIDE SEQUENCE [LARGE SCALE GENOMIC DNA]</scope>
    <source>
        <strain>U112</strain>
    </source>
</reference>
<sequence length="229" mass="26385">MCDKSKENLRQIKSYVQRAGRVTKKQQQALDNYAAKYLIEYAKDRKLDFTEIFANTNDVVLEIGFGMGGSLVEMALANPAKNYLGIEVHKAGVGNILYEIEHQNIANLLVMSHDAVEILENMIADQSLASIQVYFPDPWHKKKHNKRRLVNQTNIDLFAKKLKVGGVFHYASDWLPYAEEVLELLENDSKYRNLYSGFAPRPEWRPLTKFEKRGQNLDHPISDILFEKI</sequence>
<gene>
    <name evidence="2" type="primary">trmB</name>
    <name type="ordered locus">FTN_1400</name>
</gene>
<keyword id="KW-0489">Methyltransferase</keyword>
<keyword id="KW-0949">S-adenosyl-L-methionine</keyword>
<keyword id="KW-0808">Transferase</keyword>
<keyword id="KW-0819">tRNA processing</keyword>
<feature type="chain" id="PRO_0000288151" description="tRNA (guanine-N(7)-)-methyltransferase">
    <location>
        <begin position="1"/>
        <end position="229"/>
    </location>
</feature>
<feature type="region of interest" description="Interaction with RNA" evidence="2">
    <location>
        <begin position="143"/>
        <end position="148"/>
    </location>
</feature>
<feature type="active site" evidence="1">
    <location>
        <position position="137"/>
    </location>
</feature>
<feature type="binding site" evidence="2">
    <location>
        <position position="62"/>
    </location>
    <ligand>
        <name>S-adenosyl-L-methionine</name>
        <dbReference type="ChEBI" id="CHEBI:59789"/>
    </ligand>
</feature>
<feature type="binding site" evidence="2">
    <location>
        <position position="87"/>
    </location>
    <ligand>
        <name>S-adenosyl-L-methionine</name>
        <dbReference type="ChEBI" id="CHEBI:59789"/>
    </ligand>
</feature>
<feature type="binding site" evidence="2">
    <location>
        <position position="114"/>
    </location>
    <ligand>
        <name>S-adenosyl-L-methionine</name>
        <dbReference type="ChEBI" id="CHEBI:59789"/>
    </ligand>
</feature>
<feature type="binding site" evidence="2">
    <location>
        <position position="137"/>
    </location>
    <ligand>
        <name>S-adenosyl-L-methionine</name>
        <dbReference type="ChEBI" id="CHEBI:59789"/>
    </ligand>
</feature>
<feature type="binding site" evidence="2">
    <location>
        <position position="141"/>
    </location>
    <ligand>
        <name>substrate</name>
    </ligand>
</feature>
<feature type="binding site" evidence="2">
    <location>
        <position position="173"/>
    </location>
    <ligand>
        <name>substrate</name>
    </ligand>
</feature>
<feature type="binding site" evidence="2">
    <location>
        <begin position="208"/>
        <end position="211"/>
    </location>
    <ligand>
        <name>substrate</name>
    </ligand>
</feature>
<evidence type="ECO:0000250" key="1"/>
<evidence type="ECO:0000255" key="2">
    <source>
        <dbReference type="HAMAP-Rule" id="MF_01057"/>
    </source>
</evidence>
<protein>
    <recommendedName>
        <fullName evidence="2">tRNA (guanine-N(7)-)-methyltransferase</fullName>
        <ecNumber evidence="2">2.1.1.33</ecNumber>
    </recommendedName>
    <alternativeName>
        <fullName evidence="2">tRNA (guanine(46)-N(7))-methyltransferase</fullName>
    </alternativeName>
    <alternativeName>
        <fullName evidence="2">tRNA(m7G46)-methyltransferase</fullName>
    </alternativeName>
</protein>
<proteinExistence type="inferred from homology"/>
<organism>
    <name type="scientific">Francisella tularensis subsp. novicida (strain U112)</name>
    <dbReference type="NCBI Taxonomy" id="401614"/>
    <lineage>
        <taxon>Bacteria</taxon>
        <taxon>Pseudomonadati</taxon>
        <taxon>Pseudomonadota</taxon>
        <taxon>Gammaproteobacteria</taxon>
        <taxon>Thiotrichales</taxon>
        <taxon>Francisellaceae</taxon>
        <taxon>Francisella</taxon>
    </lineage>
</organism>
<name>TRMB_FRATN</name>
<accession>A0Q7Q5</accession>
<dbReference type="EC" id="2.1.1.33" evidence="2"/>
<dbReference type="EMBL" id="CP000439">
    <property type="protein sequence ID" value="ABK90270.1"/>
    <property type="molecule type" value="Genomic_DNA"/>
</dbReference>
<dbReference type="RefSeq" id="WP_003015034.1">
    <property type="nucleotide sequence ID" value="NZ_CP009633.1"/>
</dbReference>
<dbReference type="SMR" id="A0Q7Q5"/>
<dbReference type="KEGG" id="ftn:FTN_1400"/>
<dbReference type="KEGG" id="ftx:AW25_602"/>
<dbReference type="BioCyc" id="FTUL401614:G1G75-1447-MONOMER"/>
<dbReference type="UniPathway" id="UPA00989"/>
<dbReference type="Proteomes" id="UP000000762">
    <property type="component" value="Chromosome"/>
</dbReference>
<dbReference type="GO" id="GO:0043527">
    <property type="term" value="C:tRNA methyltransferase complex"/>
    <property type="evidence" value="ECO:0007669"/>
    <property type="project" value="TreeGrafter"/>
</dbReference>
<dbReference type="GO" id="GO:0008176">
    <property type="term" value="F:tRNA (guanine(46)-N7)-methyltransferase activity"/>
    <property type="evidence" value="ECO:0007669"/>
    <property type="project" value="UniProtKB-UniRule"/>
</dbReference>
<dbReference type="Gene3D" id="3.40.50.150">
    <property type="entry name" value="Vaccinia Virus protein VP39"/>
    <property type="match status" value="1"/>
</dbReference>
<dbReference type="HAMAP" id="MF_01057">
    <property type="entry name" value="tRNA_methyltr_TrmB"/>
    <property type="match status" value="1"/>
</dbReference>
<dbReference type="InterPro" id="IPR029063">
    <property type="entry name" value="SAM-dependent_MTases_sf"/>
</dbReference>
<dbReference type="InterPro" id="IPR003358">
    <property type="entry name" value="tRNA_(Gua-N-7)_MeTrfase_Trmb"/>
</dbReference>
<dbReference type="InterPro" id="IPR055361">
    <property type="entry name" value="tRNA_methyltr_TrmB_bact"/>
</dbReference>
<dbReference type="NCBIfam" id="TIGR00091">
    <property type="entry name" value="tRNA (guanosine(46)-N7)-methyltransferase TrmB"/>
    <property type="match status" value="1"/>
</dbReference>
<dbReference type="PANTHER" id="PTHR23417">
    <property type="entry name" value="3-DEOXY-D-MANNO-OCTULOSONIC-ACID TRANSFERASE/TRNA GUANINE-N 7 - -METHYLTRANSFERASE"/>
    <property type="match status" value="1"/>
</dbReference>
<dbReference type="PANTHER" id="PTHR23417:SF14">
    <property type="entry name" value="PENTACOTRIPEPTIDE-REPEAT REGION OF PRORP DOMAIN-CONTAINING PROTEIN"/>
    <property type="match status" value="1"/>
</dbReference>
<dbReference type="Pfam" id="PF02390">
    <property type="entry name" value="Methyltransf_4"/>
    <property type="match status" value="1"/>
</dbReference>
<dbReference type="SUPFAM" id="SSF53335">
    <property type="entry name" value="S-adenosyl-L-methionine-dependent methyltransferases"/>
    <property type="match status" value="1"/>
</dbReference>
<dbReference type="PROSITE" id="PS51625">
    <property type="entry name" value="SAM_MT_TRMB"/>
    <property type="match status" value="1"/>
</dbReference>